<gene>
    <name type="primary">ND4</name>
</gene>
<name>NU4M_STRPU</name>
<organism>
    <name type="scientific">Strongylocentrotus purpuratus</name>
    <name type="common">Purple sea urchin</name>
    <dbReference type="NCBI Taxonomy" id="7668"/>
    <lineage>
        <taxon>Eukaryota</taxon>
        <taxon>Metazoa</taxon>
        <taxon>Echinodermata</taxon>
        <taxon>Eleutherozoa</taxon>
        <taxon>Echinozoa</taxon>
        <taxon>Echinoidea</taxon>
        <taxon>Euechinoidea</taxon>
        <taxon>Echinacea</taxon>
        <taxon>Camarodonta</taxon>
        <taxon>Echinidea</taxon>
        <taxon>Strongylocentrotidae</taxon>
        <taxon>Strongylocentrotus</taxon>
    </lineage>
</organism>
<comment type="function">
    <text evidence="1">Core subunit of the mitochondrial membrane respiratory chain NADH dehydrogenase (Complex I) that is believed to belong to the minimal assembly required for catalysis. Complex I functions in the transfer of electrons from NADH to the respiratory chain. The immediate electron acceptor for the enzyme is believed to be ubiquinone (By similarity).</text>
</comment>
<comment type="catalytic activity">
    <reaction>
        <text>a ubiquinone + NADH + 5 H(+)(in) = a ubiquinol + NAD(+) + 4 H(+)(out)</text>
        <dbReference type="Rhea" id="RHEA:29091"/>
        <dbReference type="Rhea" id="RHEA-COMP:9565"/>
        <dbReference type="Rhea" id="RHEA-COMP:9566"/>
        <dbReference type="ChEBI" id="CHEBI:15378"/>
        <dbReference type="ChEBI" id="CHEBI:16389"/>
        <dbReference type="ChEBI" id="CHEBI:17976"/>
        <dbReference type="ChEBI" id="CHEBI:57540"/>
        <dbReference type="ChEBI" id="CHEBI:57945"/>
        <dbReference type="EC" id="7.1.1.2"/>
    </reaction>
</comment>
<comment type="subcellular location">
    <subcellularLocation>
        <location evidence="1">Mitochondrion membrane</location>
        <topology evidence="1">Multi-pass membrane protein</topology>
    </subcellularLocation>
</comment>
<comment type="similarity">
    <text evidence="3">Belongs to the complex I subunit 4 family.</text>
</comment>
<evidence type="ECO:0000250" key="1"/>
<evidence type="ECO:0000255" key="2"/>
<evidence type="ECO:0000305" key="3"/>
<accession>P15551</accession>
<sequence length="463" mass="50508">MMITLILFTVGMATTTLLIPSNKLWAGAIFQSALLSLLSLIVLNNHWTASWHNLSSILASDTISAPLIILSCWLAPIALIASKGQLNNSSDLGSRVFIIMIIVITGALIITFSSLELILFYIVVETTLIPTLILITRWGAQMERCQAGLYFMFYTLFGSLPLLIAIIAIYISSSSLSIPNVNLLWANDGSIESLTMWWALSINCFFNNLPVYGFHLWLPKAHVEAPVAGSMILAAILLKIGGYGLMRLIALFSTISMNALSLALIVFCTWGALITSVICVRQTDLKALIAYSSVGHMSIVAAAIFSETSWGMNGALMLMVAHGLVSSALFSLANTVYERSGTRTLAITRGLKLLLPLSTLWWLLMCAANLGLPPSPNLIGEILILSSLISWSVWLFPIVGFAQVFGAIYSLMIFQLSQQGTPFTSIINVFSSFSREHLFAALHILPLILIMINPFSALIAWLK</sequence>
<reference key="1">
    <citation type="journal article" date="1988" name="J. Mol. Biol.">
        <title>Nucleotide sequence and gene organization of sea urchin mitochondrial DNA.</title>
        <authorList>
            <person name="Jacobs H.T."/>
            <person name="Elliott D.J."/>
            <person name="Math V.B."/>
            <person name="Farquharson A."/>
        </authorList>
    </citation>
    <scope>NUCLEOTIDE SEQUENCE [GENOMIC DNA]</scope>
</reference>
<geneLocation type="mitochondrion"/>
<keyword id="KW-0249">Electron transport</keyword>
<keyword id="KW-0472">Membrane</keyword>
<keyword id="KW-0496">Mitochondrion</keyword>
<keyword id="KW-0520">NAD</keyword>
<keyword id="KW-1185">Reference proteome</keyword>
<keyword id="KW-0679">Respiratory chain</keyword>
<keyword id="KW-1278">Translocase</keyword>
<keyword id="KW-0812">Transmembrane</keyword>
<keyword id="KW-1133">Transmembrane helix</keyword>
<keyword id="KW-0813">Transport</keyword>
<keyword id="KW-0830">Ubiquinone</keyword>
<feature type="chain" id="PRO_0000117991" description="NADH-ubiquinone oxidoreductase chain 4">
    <location>
        <begin position="1"/>
        <end position="463"/>
    </location>
</feature>
<feature type="transmembrane region" description="Helical" evidence="2">
    <location>
        <begin position="24"/>
        <end position="44"/>
    </location>
</feature>
<feature type="transmembrane region" description="Helical" evidence="2">
    <location>
        <begin position="62"/>
        <end position="82"/>
    </location>
</feature>
<feature type="transmembrane region" description="Helical" evidence="2">
    <location>
        <begin position="98"/>
        <end position="118"/>
    </location>
</feature>
<feature type="transmembrane region" description="Helical" evidence="2">
    <location>
        <begin position="119"/>
        <end position="139"/>
    </location>
</feature>
<feature type="transmembrane region" description="Helical" evidence="2">
    <location>
        <begin position="151"/>
        <end position="171"/>
    </location>
</feature>
<feature type="transmembrane region" description="Helical" evidence="2">
    <location>
        <begin position="198"/>
        <end position="218"/>
    </location>
</feature>
<feature type="transmembrane region" description="Helical" evidence="2">
    <location>
        <begin position="232"/>
        <end position="252"/>
    </location>
</feature>
<feature type="transmembrane region" description="Helical" evidence="2">
    <location>
        <begin position="260"/>
        <end position="280"/>
    </location>
</feature>
<feature type="transmembrane region" description="Helical" evidence="2">
    <location>
        <begin position="285"/>
        <end position="305"/>
    </location>
</feature>
<feature type="transmembrane region" description="Helical" evidence="2">
    <location>
        <begin position="310"/>
        <end position="330"/>
    </location>
</feature>
<feature type="transmembrane region" description="Helical" evidence="2">
    <location>
        <begin position="353"/>
        <end position="373"/>
    </location>
</feature>
<feature type="transmembrane region" description="Helical" evidence="2">
    <location>
        <begin position="404"/>
        <end position="424"/>
    </location>
</feature>
<feature type="transmembrane region" description="Helical" evidence="2">
    <location>
        <begin position="442"/>
        <end position="462"/>
    </location>
</feature>
<dbReference type="EC" id="7.1.1.2"/>
<dbReference type="EMBL" id="X12631">
    <property type="protein sequence ID" value="CAA31159.2"/>
    <property type="molecule type" value="Genomic_DNA"/>
</dbReference>
<dbReference type="PIR" id="S01508">
    <property type="entry name" value="S01508"/>
</dbReference>
<dbReference type="RefSeq" id="NP_006974.2">
    <property type="nucleotide sequence ID" value="NC_001453.1"/>
</dbReference>
<dbReference type="SMR" id="P15551"/>
<dbReference type="FunCoup" id="P15551">
    <property type="interactions" value="14"/>
</dbReference>
<dbReference type="STRING" id="7668.P15551"/>
<dbReference type="GeneID" id="2652724"/>
<dbReference type="KEGG" id="spu:2652724"/>
<dbReference type="CTD" id="4538"/>
<dbReference type="InParanoid" id="P15551"/>
<dbReference type="OrthoDB" id="564260at2759"/>
<dbReference type="Proteomes" id="UP000007110">
    <property type="component" value="Unassembled WGS sequence"/>
</dbReference>
<dbReference type="GO" id="GO:0031966">
    <property type="term" value="C:mitochondrial membrane"/>
    <property type="evidence" value="ECO:0007669"/>
    <property type="project" value="UniProtKB-SubCell"/>
</dbReference>
<dbReference type="GO" id="GO:0045271">
    <property type="term" value="C:respiratory chain complex I"/>
    <property type="evidence" value="ECO:0000318"/>
    <property type="project" value="GO_Central"/>
</dbReference>
<dbReference type="GO" id="GO:0008137">
    <property type="term" value="F:NADH dehydrogenase (ubiquinone) activity"/>
    <property type="evidence" value="ECO:0007669"/>
    <property type="project" value="UniProtKB-EC"/>
</dbReference>
<dbReference type="GO" id="GO:0048039">
    <property type="term" value="F:ubiquinone binding"/>
    <property type="evidence" value="ECO:0000318"/>
    <property type="project" value="GO_Central"/>
</dbReference>
<dbReference type="GO" id="GO:0009060">
    <property type="term" value="P:aerobic respiration"/>
    <property type="evidence" value="ECO:0000318"/>
    <property type="project" value="GO_Central"/>
</dbReference>
<dbReference type="GO" id="GO:0042773">
    <property type="term" value="P:ATP synthesis coupled electron transport"/>
    <property type="evidence" value="ECO:0007669"/>
    <property type="project" value="InterPro"/>
</dbReference>
<dbReference type="GO" id="GO:0015990">
    <property type="term" value="P:electron transport coupled proton transport"/>
    <property type="evidence" value="ECO:0000318"/>
    <property type="project" value="GO_Central"/>
</dbReference>
<dbReference type="InterPro" id="IPR000260">
    <property type="entry name" value="NADH4_N"/>
</dbReference>
<dbReference type="InterPro" id="IPR010227">
    <property type="entry name" value="NADH_Q_OxRdtase_chainM/4"/>
</dbReference>
<dbReference type="InterPro" id="IPR003918">
    <property type="entry name" value="NADH_UbQ_OxRdtase"/>
</dbReference>
<dbReference type="InterPro" id="IPR001750">
    <property type="entry name" value="ND/Mrp_TM"/>
</dbReference>
<dbReference type="NCBIfam" id="TIGR01972">
    <property type="entry name" value="NDH_I_M"/>
    <property type="match status" value="1"/>
</dbReference>
<dbReference type="PANTHER" id="PTHR43507">
    <property type="entry name" value="NADH-UBIQUINONE OXIDOREDUCTASE CHAIN 4"/>
    <property type="match status" value="1"/>
</dbReference>
<dbReference type="PANTHER" id="PTHR43507:SF20">
    <property type="entry name" value="NADH-UBIQUINONE OXIDOREDUCTASE CHAIN 4"/>
    <property type="match status" value="1"/>
</dbReference>
<dbReference type="Pfam" id="PF01059">
    <property type="entry name" value="Oxidored_q5_N"/>
    <property type="match status" value="1"/>
</dbReference>
<dbReference type="Pfam" id="PF00361">
    <property type="entry name" value="Proton_antipo_M"/>
    <property type="match status" value="1"/>
</dbReference>
<dbReference type="PRINTS" id="PR01437">
    <property type="entry name" value="NUOXDRDTASE4"/>
</dbReference>
<proteinExistence type="inferred from homology"/>
<protein>
    <recommendedName>
        <fullName>NADH-ubiquinone oxidoreductase chain 4</fullName>
        <ecNumber>7.1.1.2</ecNumber>
    </recommendedName>
    <alternativeName>
        <fullName>NADH dehydrogenase subunit 4</fullName>
    </alternativeName>
</protein>